<keyword id="KW-0131">Cell cycle</keyword>
<keyword id="KW-0132">Cell division</keyword>
<keyword id="KW-1003">Cell membrane</keyword>
<keyword id="KW-0175">Coiled coil</keyword>
<keyword id="KW-0472">Membrane</keyword>
<keyword id="KW-0717">Septation</keyword>
<keyword id="KW-0812">Transmembrane</keyword>
<keyword id="KW-1133">Transmembrane helix</keyword>
<protein>
    <recommendedName>
        <fullName evidence="1">Septation ring formation regulator EzrA</fullName>
    </recommendedName>
</protein>
<gene>
    <name evidence="1" type="primary">ezrA</name>
    <name type="ordered locus">BCE_4786</name>
</gene>
<reference key="1">
    <citation type="journal article" date="2004" name="Nucleic Acids Res.">
        <title>The genome sequence of Bacillus cereus ATCC 10987 reveals metabolic adaptations and a large plasmid related to Bacillus anthracis pXO1.</title>
        <authorList>
            <person name="Rasko D.A."/>
            <person name="Ravel J."/>
            <person name="Oekstad O.A."/>
            <person name="Helgason E."/>
            <person name="Cer R.Z."/>
            <person name="Jiang L."/>
            <person name="Shores K.A."/>
            <person name="Fouts D.E."/>
            <person name="Tourasse N.J."/>
            <person name="Angiuoli S.V."/>
            <person name="Kolonay J.F."/>
            <person name="Nelson W.C."/>
            <person name="Kolstoe A.-B."/>
            <person name="Fraser C.M."/>
            <person name="Read T.D."/>
        </authorList>
    </citation>
    <scope>NUCLEOTIDE SEQUENCE [LARGE SCALE GENOMIC DNA]</scope>
    <source>
        <strain>ATCC 10987 / NRS 248</strain>
    </source>
</reference>
<feature type="chain" id="PRO_1000045892" description="Septation ring formation regulator EzrA">
    <location>
        <begin position="1"/>
        <end position="570"/>
    </location>
</feature>
<feature type="topological domain" description="Extracellular" evidence="1">
    <location>
        <begin position="1"/>
        <end position="6"/>
    </location>
</feature>
<feature type="transmembrane region" description="Helical" evidence="1">
    <location>
        <begin position="7"/>
        <end position="25"/>
    </location>
</feature>
<feature type="topological domain" description="Cytoplasmic" evidence="1">
    <location>
        <begin position="26"/>
        <end position="570"/>
    </location>
</feature>
<feature type="coiled-coil region" evidence="1">
    <location>
        <begin position="115"/>
        <end position="149"/>
    </location>
</feature>
<feature type="coiled-coil region" evidence="1">
    <location>
        <begin position="275"/>
        <end position="303"/>
    </location>
</feature>
<feature type="coiled-coil region" evidence="1">
    <location>
        <begin position="355"/>
        <end position="429"/>
    </location>
</feature>
<accession>Q72Z83</accession>
<evidence type="ECO:0000255" key="1">
    <source>
        <dbReference type="HAMAP-Rule" id="MF_00728"/>
    </source>
</evidence>
<proteinExistence type="inferred from homology"/>
<sequence length="570" mass="66513">MDSILTIVIIVVSSILVLLMIELVIRNRSYKDIEALEQWKQEIKDKPVADELKRVKDLNMTGQTEELFGKWREEWDEIVSTTIPKADKDLAQARKFASQFSFRKAKHAMNESISGLDDADNRITDILNELQQLLESHEKNSSEIEGLRDTYRSMKKSVLAHRHMYGAAEQKIEEMLDAESEKFKTFEEATNNGDYLKAREIVISLEEGLADLEIIIHQIPDLLVECQATLPVQLEDLLHGHNDMVRQGYVLEYLEIPKEVRDMKKQLQICLMDIQELHITEAAEKVENLKTSLDSFYDQLEQEVHARHYVEQKTLSVYEDLEEIRTETIETKAETQLVKQSYQLQDKDIESQKVIEKQMHILMKRFEMLQLRVAEQDIAFSIIREELEEIYEQCETLKVLHAEYKEMLQTMRKEEFEAREKLQEMRNTIFETKRFMQKSNLPGLPESIMEDLKRGQMAMQAVYEQLEVKPLNMNAVNSSLEEAYTTVNGVAEMTEELIGQAYLVEKLIQYGNRYRSHDENLAESLNYAEKLFREYQYDAALEQAASVLEQLEPGVVQKIAEYVDNEQTLS</sequence>
<comment type="function">
    <text evidence="1">Negative regulator of FtsZ ring formation; modulates the frequency and position of FtsZ ring formation. Inhibits FtsZ ring formation at polar sites. Interacts either with FtsZ or with one of its binding partners to promote depolymerization.</text>
</comment>
<comment type="subcellular location">
    <subcellularLocation>
        <location evidence="1">Cell membrane</location>
        <topology evidence="1">Single-pass membrane protein</topology>
    </subcellularLocation>
    <text evidence="1">Colocalized with FtsZ to the nascent septal site.</text>
</comment>
<comment type="similarity">
    <text evidence="1">Belongs to the EzrA family.</text>
</comment>
<dbReference type="EMBL" id="AE017194">
    <property type="protein sequence ID" value="AAS43687.1"/>
    <property type="molecule type" value="Genomic_DNA"/>
</dbReference>
<dbReference type="SMR" id="Q72Z83"/>
<dbReference type="KEGG" id="bca:BCE_4786"/>
<dbReference type="HOGENOM" id="CLU_034079_1_0_9"/>
<dbReference type="Proteomes" id="UP000002527">
    <property type="component" value="Chromosome"/>
</dbReference>
<dbReference type="GO" id="GO:0005886">
    <property type="term" value="C:plasma membrane"/>
    <property type="evidence" value="ECO:0007669"/>
    <property type="project" value="UniProtKB-SubCell"/>
</dbReference>
<dbReference type="GO" id="GO:0005940">
    <property type="term" value="C:septin ring"/>
    <property type="evidence" value="ECO:0007669"/>
    <property type="project" value="InterPro"/>
</dbReference>
<dbReference type="GO" id="GO:0000917">
    <property type="term" value="P:division septum assembly"/>
    <property type="evidence" value="ECO:0007669"/>
    <property type="project" value="UniProtKB-KW"/>
</dbReference>
<dbReference type="GO" id="GO:0000921">
    <property type="term" value="P:septin ring assembly"/>
    <property type="evidence" value="ECO:0007669"/>
    <property type="project" value="InterPro"/>
</dbReference>
<dbReference type="HAMAP" id="MF_00728">
    <property type="entry name" value="EzrA"/>
    <property type="match status" value="1"/>
</dbReference>
<dbReference type="InterPro" id="IPR010379">
    <property type="entry name" value="EzrA"/>
</dbReference>
<dbReference type="NCBIfam" id="NF003411">
    <property type="entry name" value="PRK04778.1-5"/>
    <property type="match status" value="1"/>
</dbReference>
<dbReference type="NCBIfam" id="NF003413">
    <property type="entry name" value="PRK04778.1-7"/>
    <property type="match status" value="1"/>
</dbReference>
<dbReference type="Pfam" id="PF06160">
    <property type="entry name" value="EzrA"/>
    <property type="match status" value="1"/>
</dbReference>
<organism>
    <name type="scientific">Bacillus cereus (strain ATCC 10987 / NRS 248)</name>
    <dbReference type="NCBI Taxonomy" id="222523"/>
    <lineage>
        <taxon>Bacteria</taxon>
        <taxon>Bacillati</taxon>
        <taxon>Bacillota</taxon>
        <taxon>Bacilli</taxon>
        <taxon>Bacillales</taxon>
        <taxon>Bacillaceae</taxon>
        <taxon>Bacillus</taxon>
        <taxon>Bacillus cereus group</taxon>
    </lineage>
</organism>
<name>EZRA_BACC1</name>